<gene>
    <name evidence="1" type="primary">gph</name>
    <name type="ordered locus">VV3059</name>
</gene>
<evidence type="ECO:0000255" key="1">
    <source>
        <dbReference type="HAMAP-Rule" id="MF_00495"/>
    </source>
</evidence>
<evidence type="ECO:0000305" key="2"/>
<keyword id="KW-0119">Carbohydrate metabolism</keyword>
<keyword id="KW-0378">Hydrolase</keyword>
<keyword id="KW-0460">Magnesium</keyword>
<keyword id="KW-0479">Metal-binding</keyword>
<accession>Q7MH14</accession>
<comment type="function">
    <text evidence="1">Specifically catalyzes the dephosphorylation of 2-phosphoglycolate. Is involved in the dissimilation of the intracellular 2-phosphoglycolate formed during the DNA repair of 3'-phosphoglycolate ends, a major class of DNA lesions induced by oxidative stress.</text>
</comment>
<comment type="catalytic activity">
    <reaction evidence="1">
        <text>2-phosphoglycolate + H2O = glycolate + phosphate</text>
        <dbReference type="Rhea" id="RHEA:14369"/>
        <dbReference type="ChEBI" id="CHEBI:15377"/>
        <dbReference type="ChEBI" id="CHEBI:29805"/>
        <dbReference type="ChEBI" id="CHEBI:43474"/>
        <dbReference type="ChEBI" id="CHEBI:58033"/>
        <dbReference type="EC" id="3.1.3.18"/>
    </reaction>
</comment>
<comment type="cofactor">
    <cofactor evidence="1">
        <name>Mg(2+)</name>
        <dbReference type="ChEBI" id="CHEBI:18420"/>
    </cofactor>
</comment>
<comment type="pathway">
    <text evidence="1">Organic acid metabolism; glycolate biosynthesis; glycolate from 2-phosphoglycolate: step 1/1.</text>
</comment>
<comment type="similarity">
    <text evidence="1">Belongs to the HAD-like hydrolase superfamily. CbbY/CbbZ/Gph/YieH family.</text>
</comment>
<comment type="sequence caution" evidence="2">
    <conflict type="erroneous initiation">
        <sequence resource="EMBL-CDS" id="BAC95823"/>
    </conflict>
    <text>Extended N-terminus.</text>
</comment>
<feature type="chain" id="PRO_0000108046" description="Phosphoglycolate phosphatase">
    <location>
        <begin position="1"/>
        <end position="228"/>
    </location>
</feature>
<feature type="active site" description="Nucleophile" evidence="1">
    <location>
        <position position="12"/>
    </location>
</feature>
<feature type="binding site" evidence="1">
    <location>
        <position position="12"/>
    </location>
    <ligand>
        <name>Mg(2+)</name>
        <dbReference type="ChEBI" id="CHEBI:18420"/>
    </ligand>
</feature>
<feature type="binding site" evidence="1">
    <location>
        <position position="14"/>
    </location>
    <ligand>
        <name>Mg(2+)</name>
        <dbReference type="ChEBI" id="CHEBI:18420"/>
    </ligand>
</feature>
<feature type="binding site" evidence="1">
    <location>
        <position position="177"/>
    </location>
    <ligand>
        <name>Mg(2+)</name>
        <dbReference type="ChEBI" id="CHEBI:18420"/>
    </ligand>
</feature>
<sequence>MTQQEIKLIAFDLDGTLLDSVPDLAVAADQATRAVGFPGVTELQVRDYVGNGADILIGRALSQSLTINPELSDELRAQARELFDDFYQQTGHKLSHLYPTVKETLKALHQAGFTLALVTNKPSKFVPDVLQQHGIADYFVDVLGGDSFPEKKPNPIALNWLMEKHQIQPTEMLMVGDSKNDILAAKNAGCASFGLTYGYNHGEPISASEPDFVADSLAQLLDVVLVSA</sequence>
<proteinExistence type="inferred from homology"/>
<name>GPH_VIBVY</name>
<reference key="1">
    <citation type="journal article" date="2003" name="Genome Res.">
        <title>Comparative genome analysis of Vibrio vulnificus, a marine pathogen.</title>
        <authorList>
            <person name="Chen C.-Y."/>
            <person name="Wu K.-M."/>
            <person name="Chang Y.-C."/>
            <person name="Chang C.-H."/>
            <person name="Tsai H.-C."/>
            <person name="Liao T.-L."/>
            <person name="Liu Y.-M."/>
            <person name="Chen H.-J."/>
            <person name="Shen A.B.-T."/>
            <person name="Li J.-C."/>
            <person name="Su T.-L."/>
            <person name="Shao C.-P."/>
            <person name="Lee C.-T."/>
            <person name="Hor L.-I."/>
            <person name="Tsai S.-F."/>
        </authorList>
    </citation>
    <scope>NUCLEOTIDE SEQUENCE [LARGE SCALE GENOMIC DNA]</scope>
    <source>
        <strain>YJ016</strain>
    </source>
</reference>
<protein>
    <recommendedName>
        <fullName evidence="1">Phosphoglycolate phosphatase</fullName>
        <shortName evidence="1">PGP</shortName>
        <shortName evidence="1">PGPase</shortName>
        <ecNumber evidence="1">3.1.3.18</ecNumber>
    </recommendedName>
</protein>
<organism>
    <name type="scientific">Vibrio vulnificus (strain YJ016)</name>
    <dbReference type="NCBI Taxonomy" id="196600"/>
    <lineage>
        <taxon>Bacteria</taxon>
        <taxon>Pseudomonadati</taxon>
        <taxon>Pseudomonadota</taxon>
        <taxon>Gammaproteobacteria</taxon>
        <taxon>Vibrionales</taxon>
        <taxon>Vibrionaceae</taxon>
        <taxon>Vibrio</taxon>
    </lineage>
</organism>
<dbReference type="EC" id="3.1.3.18" evidence="1"/>
<dbReference type="EMBL" id="BA000037">
    <property type="protein sequence ID" value="BAC95823.1"/>
    <property type="status" value="ALT_INIT"/>
    <property type="molecule type" value="Genomic_DNA"/>
</dbReference>
<dbReference type="RefSeq" id="WP_043877341.1">
    <property type="nucleotide sequence ID" value="NC_005139.1"/>
</dbReference>
<dbReference type="SMR" id="Q7MH14"/>
<dbReference type="STRING" id="672.VV93_v1c27870"/>
<dbReference type="KEGG" id="vvy:VV3059"/>
<dbReference type="PATRIC" id="fig|196600.6.peg.3036"/>
<dbReference type="eggNOG" id="COG0546">
    <property type="taxonomic scope" value="Bacteria"/>
</dbReference>
<dbReference type="HOGENOM" id="CLU_045011_19_1_6"/>
<dbReference type="UniPathway" id="UPA00865">
    <property type="reaction ID" value="UER00834"/>
</dbReference>
<dbReference type="Proteomes" id="UP000002675">
    <property type="component" value="Chromosome I"/>
</dbReference>
<dbReference type="GO" id="GO:0005829">
    <property type="term" value="C:cytosol"/>
    <property type="evidence" value="ECO:0007669"/>
    <property type="project" value="TreeGrafter"/>
</dbReference>
<dbReference type="GO" id="GO:0046872">
    <property type="term" value="F:metal ion binding"/>
    <property type="evidence" value="ECO:0007669"/>
    <property type="project" value="UniProtKB-KW"/>
</dbReference>
<dbReference type="GO" id="GO:0008967">
    <property type="term" value="F:phosphoglycolate phosphatase activity"/>
    <property type="evidence" value="ECO:0007669"/>
    <property type="project" value="UniProtKB-UniRule"/>
</dbReference>
<dbReference type="GO" id="GO:0005975">
    <property type="term" value="P:carbohydrate metabolic process"/>
    <property type="evidence" value="ECO:0007669"/>
    <property type="project" value="InterPro"/>
</dbReference>
<dbReference type="GO" id="GO:0006281">
    <property type="term" value="P:DNA repair"/>
    <property type="evidence" value="ECO:0007669"/>
    <property type="project" value="TreeGrafter"/>
</dbReference>
<dbReference type="GO" id="GO:0046295">
    <property type="term" value="P:glycolate biosynthetic process"/>
    <property type="evidence" value="ECO:0007669"/>
    <property type="project" value="UniProtKB-UniRule"/>
</dbReference>
<dbReference type="CDD" id="cd16417">
    <property type="entry name" value="HAD_PGPase"/>
    <property type="match status" value="1"/>
</dbReference>
<dbReference type="FunFam" id="3.40.50.1000:FF:000022">
    <property type="entry name" value="Phosphoglycolate phosphatase"/>
    <property type="match status" value="1"/>
</dbReference>
<dbReference type="Gene3D" id="3.40.50.1000">
    <property type="entry name" value="HAD superfamily/HAD-like"/>
    <property type="match status" value="1"/>
</dbReference>
<dbReference type="Gene3D" id="1.10.150.240">
    <property type="entry name" value="Putative phosphatase, domain 2"/>
    <property type="match status" value="1"/>
</dbReference>
<dbReference type="HAMAP" id="MF_00495">
    <property type="entry name" value="GPH_hydrolase_bact"/>
    <property type="match status" value="1"/>
</dbReference>
<dbReference type="InterPro" id="IPR050155">
    <property type="entry name" value="HAD-like_hydrolase_sf"/>
</dbReference>
<dbReference type="InterPro" id="IPR036412">
    <property type="entry name" value="HAD-like_sf"/>
</dbReference>
<dbReference type="InterPro" id="IPR006439">
    <property type="entry name" value="HAD-SF_hydro_IA"/>
</dbReference>
<dbReference type="InterPro" id="IPR006549">
    <property type="entry name" value="HAD-SF_hydro_IIIA"/>
</dbReference>
<dbReference type="InterPro" id="IPR041492">
    <property type="entry name" value="HAD_2"/>
</dbReference>
<dbReference type="InterPro" id="IPR023214">
    <property type="entry name" value="HAD_sf"/>
</dbReference>
<dbReference type="InterPro" id="IPR023198">
    <property type="entry name" value="PGP-like_dom2"/>
</dbReference>
<dbReference type="InterPro" id="IPR037512">
    <property type="entry name" value="PGPase_prok"/>
</dbReference>
<dbReference type="NCBIfam" id="TIGR01549">
    <property type="entry name" value="HAD-SF-IA-v1"/>
    <property type="match status" value="1"/>
</dbReference>
<dbReference type="NCBIfam" id="TIGR01509">
    <property type="entry name" value="HAD-SF-IA-v3"/>
    <property type="match status" value="1"/>
</dbReference>
<dbReference type="NCBIfam" id="TIGR01662">
    <property type="entry name" value="HAD-SF-IIIA"/>
    <property type="match status" value="1"/>
</dbReference>
<dbReference type="NCBIfam" id="TIGR01449">
    <property type="entry name" value="PGP_bact"/>
    <property type="match status" value="1"/>
</dbReference>
<dbReference type="NCBIfam" id="NF009695">
    <property type="entry name" value="PRK13222.1-2"/>
    <property type="match status" value="1"/>
</dbReference>
<dbReference type="PANTHER" id="PTHR43434">
    <property type="entry name" value="PHOSPHOGLYCOLATE PHOSPHATASE"/>
    <property type="match status" value="1"/>
</dbReference>
<dbReference type="PANTHER" id="PTHR43434:SF1">
    <property type="entry name" value="PHOSPHOGLYCOLATE PHOSPHATASE"/>
    <property type="match status" value="1"/>
</dbReference>
<dbReference type="Pfam" id="PF13419">
    <property type="entry name" value="HAD_2"/>
    <property type="match status" value="1"/>
</dbReference>
<dbReference type="SFLD" id="SFLDG01135">
    <property type="entry name" value="C1.5.6:_HAD__Beta-PGM__Phospha"/>
    <property type="match status" value="1"/>
</dbReference>
<dbReference type="SFLD" id="SFLDS00003">
    <property type="entry name" value="Haloacid_Dehalogenase"/>
    <property type="match status" value="1"/>
</dbReference>
<dbReference type="SUPFAM" id="SSF56784">
    <property type="entry name" value="HAD-like"/>
    <property type="match status" value="1"/>
</dbReference>